<name>LLDD_STRMK</name>
<proteinExistence type="inferred from homology"/>
<sequence length="379" mass="41191">MIISASTDYRAAAERRLPPFLFHYIDGGAYAEHTLKRNVSDLSDIALRQRILRNMSDLSLETELFGETLAMPVALAPVGLTGMYARRGEVQAARAADSRGIPFTLSTVSVCPIEEVAPAIQRPMWFQLYVLRDRGFMRNALERAQAAGVTTLVFTVDMPVPGARYRDAHSGMSGPNASLRRIGQAITHPHWAWDVGLFGRPHDLGNISTYRGNPTGLEDYIGWLGSNFDPSISWKDLEWIREFWKGPMVIKGILDPDDARDAVRFGADGIVVSNHGGRQLDGVLSTARALPAIADAVQGDLKILADSGIRTGLDVVRMLALGADTVLLGRAFVYALAAQGEAGVANLLDLIAKEMRVAMTLTGARRIADIGRDSLVSLP</sequence>
<protein>
    <recommendedName>
        <fullName evidence="1">L-lactate dehydrogenase</fullName>
        <ecNumber evidence="1">1.1.-.-</ecNumber>
    </recommendedName>
</protein>
<organism>
    <name type="scientific">Stenotrophomonas maltophilia (strain K279a)</name>
    <dbReference type="NCBI Taxonomy" id="522373"/>
    <lineage>
        <taxon>Bacteria</taxon>
        <taxon>Pseudomonadati</taxon>
        <taxon>Pseudomonadota</taxon>
        <taxon>Gammaproteobacteria</taxon>
        <taxon>Lysobacterales</taxon>
        <taxon>Lysobacteraceae</taxon>
        <taxon>Stenotrophomonas</taxon>
        <taxon>Stenotrophomonas maltophilia group</taxon>
    </lineage>
</organism>
<accession>B2FIJ0</accession>
<evidence type="ECO:0000255" key="1">
    <source>
        <dbReference type="HAMAP-Rule" id="MF_01559"/>
    </source>
</evidence>
<reference key="1">
    <citation type="journal article" date="2008" name="Genome Biol.">
        <title>The complete genome, comparative and functional analysis of Stenotrophomonas maltophilia reveals an organism heavily shielded by drug resistance determinants.</title>
        <authorList>
            <person name="Crossman L.C."/>
            <person name="Gould V.C."/>
            <person name="Dow J.M."/>
            <person name="Vernikos G.S."/>
            <person name="Okazaki A."/>
            <person name="Sebaihia M."/>
            <person name="Saunders D."/>
            <person name="Arrowsmith C."/>
            <person name="Carver T."/>
            <person name="Peters N."/>
            <person name="Adlem E."/>
            <person name="Kerhornou A."/>
            <person name="Lord A."/>
            <person name="Murphy L."/>
            <person name="Seeger K."/>
            <person name="Squares R."/>
            <person name="Rutter S."/>
            <person name="Quail M.A."/>
            <person name="Rajandream M.A."/>
            <person name="Harris D."/>
            <person name="Churcher C."/>
            <person name="Bentley S.D."/>
            <person name="Parkhill J."/>
            <person name="Thomson N.R."/>
            <person name="Avison M.B."/>
        </authorList>
    </citation>
    <scope>NUCLEOTIDE SEQUENCE [LARGE SCALE GENOMIC DNA]</scope>
    <source>
        <strain>K279a</strain>
    </source>
</reference>
<comment type="function">
    <text evidence="1">Catalyzes the conversion of L-lactate to pyruvate. Is coupled to the respiratory chain.</text>
</comment>
<comment type="catalytic activity">
    <reaction evidence="1">
        <text>(S)-lactate + A = pyruvate + AH2</text>
        <dbReference type="Rhea" id="RHEA:45816"/>
        <dbReference type="ChEBI" id="CHEBI:13193"/>
        <dbReference type="ChEBI" id="CHEBI:15361"/>
        <dbReference type="ChEBI" id="CHEBI:16651"/>
        <dbReference type="ChEBI" id="CHEBI:17499"/>
    </reaction>
</comment>
<comment type="cofactor">
    <cofactor evidence="1">
        <name>FMN</name>
        <dbReference type="ChEBI" id="CHEBI:58210"/>
    </cofactor>
</comment>
<comment type="subcellular location">
    <subcellularLocation>
        <location evidence="1">Cell inner membrane</location>
        <topology evidence="1">Peripheral membrane protein</topology>
    </subcellularLocation>
</comment>
<comment type="similarity">
    <text evidence="1">Belongs to the FMN-dependent alpha-hydroxy acid dehydrogenase family.</text>
</comment>
<dbReference type="EC" id="1.1.-.-" evidence="1"/>
<dbReference type="EMBL" id="AM743169">
    <property type="protein sequence ID" value="CAQ46364.1"/>
    <property type="molecule type" value="Genomic_DNA"/>
</dbReference>
<dbReference type="RefSeq" id="WP_005410033.1">
    <property type="nucleotide sequence ID" value="NC_010943.1"/>
</dbReference>
<dbReference type="SMR" id="B2FIJ0"/>
<dbReference type="EnsemblBacteria" id="CAQ46364">
    <property type="protein sequence ID" value="CAQ46364"/>
    <property type="gene ID" value="Smlt2908"/>
</dbReference>
<dbReference type="GeneID" id="93833904"/>
<dbReference type="KEGG" id="sml:Smlt2908"/>
<dbReference type="eggNOG" id="COG1304">
    <property type="taxonomic scope" value="Bacteria"/>
</dbReference>
<dbReference type="HOGENOM" id="CLU_020639_0_0_6"/>
<dbReference type="Proteomes" id="UP000008840">
    <property type="component" value="Chromosome"/>
</dbReference>
<dbReference type="GO" id="GO:0005886">
    <property type="term" value="C:plasma membrane"/>
    <property type="evidence" value="ECO:0007669"/>
    <property type="project" value="UniProtKB-SubCell"/>
</dbReference>
<dbReference type="GO" id="GO:0010181">
    <property type="term" value="F:FMN binding"/>
    <property type="evidence" value="ECO:0007669"/>
    <property type="project" value="InterPro"/>
</dbReference>
<dbReference type="GO" id="GO:0004459">
    <property type="term" value="F:L-lactate dehydrogenase activity"/>
    <property type="evidence" value="ECO:0007669"/>
    <property type="project" value="UniProtKB-UniRule"/>
</dbReference>
<dbReference type="GO" id="GO:0009060">
    <property type="term" value="P:aerobic respiration"/>
    <property type="evidence" value="ECO:0007669"/>
    <property type="project" value="TreeGrafter"/>
</dbReference>
<dbReference type="GO" id="GO:0006089">
    <property type="term" value="P:lactate metabolic process"/>
    <property type="evidence" value="ECO:0007669"/>
    <property type="project" value="UniProtKB-UniRule"/>
</dbReference>
<dbReference type="CDD" id="cd02809">
    <property type="entry name" value="alpha_hydroxyacid_oxid_FMN"/>
    <property type="match status" value="1"/>
</dbReference>
<dbReference type="FunFam" id="3.20.20.70:FF:000029">
    <property type="entry name" value="L-lactate dehydrogenase"/>
    <property type="match status" value="1"/>
</dbReference>
<dbReference type="Gene3D" id="3.20.20.70">
    <property type="entry name" value="Aldolase class I"/>
    <property type="match status" value="1"/>
</dbReference>
<dbReference type="HAMAP" id="MF_01559">
    <property type="entry name" value="L_lact_dehydr"/>
    <property type="match status" value="1"/>
</dbReference>
<dbReference type="InterPro" id="IPR013785">
    <property type="entry name" value="Aldolase_TIM"/>
</dbReference>
<dbReference type="InterPro" id="IPR012133">
    <property type="entry name" value="Alpha-hydoxy_acid_DH_FMN"/>
</dbReference>
<dbReference type="InterPro" id="IPR000262">
    <property type="entry name" value="FMN-dep_DH"/>
</dbReference>
<dbReference type="InterPro" id="IPR037396">
    <property type="entry name" value="FMN_HAD"/>
</dbReference>
<dbReference type="InterPro" id="IPR008259">
    <property type="entry name" value="FMN_hydac_DH_AS"/>
</dbReference>
<dbReference type="InterPro" id="IPR020920">
    <property type="entry name" value="LldD"/>
</dbReference>
<dbReference type="NCBIfam" id="NF033901">
    <property type="entry name" value="L_lactate_LldD"/>
    <property type="match status" value="1"/>
</dbReference>
<dbReference type="NCBIfam" id="NF008398">
    <property type="entry name" value="PRK11197.1"/>
    <property type="match status" value="1"/>
</dbReference>
<dbReference type="PANTHER" id="PTHR10578:SF85">
    <property type="entry name" value="L-LACTATE DEHYDROGENASE"/>
    <property type="match status" value="1"/>
</dbReference>
<dbReference type="PANTHER" id="PTHR10578">
    <property type="entry name" value="S -2-HYDROXY-ACID OXIDASE-RELATED"/>
    <property type="match status" value="1"/>
</dbReference>
<dbReference type="Pfam" id="PF01070">
    <property type="entry name" value="FMN_dh"/>
    <property type="match status" value="1"/>
</dbReference>
<dbReference type="PIRSF" id="PIRSF000138">
    <property type="entry name" value="Al-hdrx_acd_dh"/>
    <property type="match status" value="1"/>
</dbReference>
<dbReference type="SUPFAM" id="SSF51395">
    <property type="entry name" value="FMN-linked oxidoreductases"/>
    <property type="match status" value="1"/>
</dbReference>
<dbReference type="PROSITE" id="PS00557">
    <property type="entry name" value="FMN_HYDROXY_ACID_DH_1"/>
    <property type="match status" value="1"/>
</dbReference>
<dbReference type="PROSITE" id="PS51349">
    <property type="entry name" value="FMN_HYDROXY_ACID_DH_2"/>
    <property type="match status" value="1"/>
</dbReference>
<gene>
    <name evidence="1" type="primary">lldD</name>
    <name type="ordered locus">Smlt2908</name>
</gene>
<feature type="chain" id="PRO_0000383449" description="L-lactate dehydrogenase">
    <location>
        <begin position="1"/>
        <end position="379"/>
    </location>
</feature>
<feature type="domain" description="FMN hydroxy acid dehydrogenase" evidence="1">
    <location>
        <begin position="1"/>
        <end position="379"/>
    </location>
</feature>
<feature type="active site" description="Proton acceptor" evidence="1">
    <location>
        <position position="275"/>
    </location>
</feature>
<feature type="binding site" evidence="1">
    <location>
        <position position="24"/>
    </location>
    <ligand>
        <name>substrate</name>
    </ligand>
</feature>
<feature type="binding site" evidence="1">
    <location>
        <position position="106"/>
    </location>
    <ligand>
        <name>FMN</name>
        <dbReference type="ChEBI" id="CHEBI:58210"/>
    </ligand>
</feature>
<feature type="binding site" evidence="1">
    <location>
        <position position="127"/>
    </location>
    <ligand>
        <name>FMN</name>
        <dbReference type="ChEBI" id="CHEBI:58210"/>
    </ligand>
</feature>
<feature type="binding site" evidence="1">
    <location>
        <position position="129"/>
    </location>
    <ligand>
        <name>substrate</name>
    </ligand>
</feature>
<feature type="binding site" evidence="1">
    <location>
        <position position="155"/>
    </location>
    <ligand>
        <name>FMN</name>
        <dbReference type="ChEBI" id="CHEBI:58210"/>
    </ligand>
</feature>
<feature type="binding site" evidence="1">
    <location>
        <position position="164"/>
    </location>
    <ligand>
        <name>substrate</name>
    </ligand>
</feature>
<feature type="binding site" evidence="1">
    <location>
        <position position="251"/>
    </location>
    <ligand>
        <name>FMN</name>
        <dbReference type="ChEBI" id="CHEBI:58210"/>
    </ligand>
</feature>
<feature type="binding site" evidence="1">
    <location>
        <position position="278"/>
    </location>
    <ligand>
        <name>substrate</name>
    </ligand>
</feature>
<feature type="binding site" evidence="1">
    <location>
        <begin position="306"/>
        <end position="330"/>
    </location>
    <ligand>
        <name>FMN</name>
        <dbReference type="ChEBI" id="CHEBI:58210"/>
    </ligand>
</feature>
<keyword id="KW-0997">Cell inner membrane</keyword>
<keyword id="KW-1003">Cell membrane</keyword>
<keyword id="KW-0285">Flavoprotein</keyword>
<keyword id="KW-0288">FMN</keyword>
<keyword id="KW-0472">Membrane</keyword>
<keyword id="KW-0560">Oxidoreductase</keyword>
<keyword id="KW-1185">Reference proteome</keyword>